<sequence>MQIGQRLGTPLSPSATRVMLLGAGELGKEVIIALQRLGVEVIAVDRYPNAPGHQVAHRAHVIDMTDPDALRALVDAERPHLVVPEIEAIATDALAAIEAAGVCEVIPTARATQLTMNREGIRRLAAEELGLPTSPYAFAQSFDEFAAAVARIGFPCVVKPVMSSSGKGQSVVRSEADIEPAWRYAMAGGRVNHGRVIVEGFIRFDYEITQLTVRAIDPASGQTRTSFCAPIGHLQVAGDYVESWQPQPMSAKALERSRDIAHRVTSALGGRGIFGVELFVRGDDVWFSEVSPRPHDTGLVTLASQRQSEFELHARAILGLPVEPALATPAASAVIYGGLDEAGIAFEGVRDALAVPGADLRLFGKPESFAKRRMGVALATGANVDEARERAKRAAAAVRPVSAR</sequence>
<feature type="chain" id="PRO_0000319141" description="Formate-dependent phosphoribosylglycinamide formyltransferase">
    <location>
        <begin position="1"/>
        <end position="404"/>
    </location>
</feature>
<feature type="domain" description="ATP-grasp" evidence="1">
    <location>
        <begin position="123"/>
        <end position="318"/>
    </location>
</feature>
<feature type="binding site" evidence="1">
    <location>
        <begin position="25"/>
        <end position="26"/>
    </location>
    <ligand>
        <name>N(1)-(5-phospho-beta-D-ribosyl)glycinamide</name>
        <dbReference type="ChEBI" id="CHEBI:143788"/>
    </ligand>
</feature>
<feature type="binding site" evidence="1">
    <location>
        <position position="85"/>
    </location>
    <ligand>
        <name>N(1)-(5-phospho-beta-D-ribosyl)glycinamide</name>
        <dbReference type="ChEBI" id="CHEBI:143788"/>
    </ligand>
</feature>
<feature type="binding site" evidence="1">
    <location>
        <position position="118"/>
    </location>
    <ligand>
        <name>ATP</name>
        <dbReference type="ChEBI" id="CHEBI:30616"/>
    </ligand>
</feature>
<feature type="binding site" evidence="1">
    <location>
        <position position="159"/>
    </location>
    <ligand>
        <name>ATP</name>
        <dbReference type="ChEBI" id="CHEBI:30616"/>
    </ligand>
</feature>
<feature type="binding site" evidence="1">
    <location>
        <begin position="164"/>
        <end position="169"/>
    </location>
    <ligand>
        <name>ATP</name>
        <dbReference type="ChEBI" id="CHEBI:30616"/>
    </ligand>
</feature>
<feature type="binding site" evidence="1">
    <location>
        <begin position="199"/>
        <end position="202"/>
    </location>
    <ligand>
        <name>ATP</name>
        <dbReference type="ChEBI" id="CHEBI:30616"/>
    </ligand>
</feature>
<feature type="binding site" evidence="1">
    <location>
        <position position="207"/>
    </location>
    <ligand>
        <name>ATP</name>
        <dbReference type="ChEBI" id="CHEBI:30616"/>
    </ligand>
</feature>
<feature type="binding site" evidence="1">
    <location>
        <position position="277"/>
    </location>
    <ligand>
        <name>Mg(2+)</name>
        <dbReference type="ChEBI" id="CHEBI:18420"/>
    </ligand>
</feature>
<feature type="binding site" evidence="1">
    <location>
        <position position="289"/>
    </location>
    <ligand>
        <name>Mg(2+)</name>
        <dbReference type="ChEBI" id="CHEBI:18420"/>
    </ligand>
</feature>
<feature type="binding site" evidence="1">
    <location>
        <position position="296"/>
    </location>
    <ligand>
        <name>N(1)-(5-phospho-beta-D-ribosyl)glycinamide</name>
        <dbReference type="ChEBI" id="CHEBI:143788"/>
    </ligand>
</feature>
<feature type="binding site" evidence="1">
    <location>
        <position position="365"/>
    </location>
    <ligand>
        <name>N(1)-(5-phospho-beta-D-ribosyl)glycinamide</name>
        <dbReference type="ChEBI" id="CHEBI:143788"/>
    </ligand>
</feature>
<feature type="binding site" evidence="1">
    <location>
        <begin position="372"/>
        <end position="373"/>
    </location>
    <ligand>
        <name>N(1)-(5-phospho-beta-D-ribosyl)glycinamide</name>
        <dbReference type="ChEBI" id="CHEBI:143788"/>
    </ligand>
</feature>
<organism>
    <name type="scientific">Burkholderia pseudomallei (strain K96243)</name>
    <dbReference type="NCBI Taxonomy" id="272560"/>
    <lineage>
        <taxon>Bacteria</taxon>
        <taxon>Pseudomonadati</taxon>
        <taxon>Pseudomonadota</taxon>
        <taxon>Betaproteobacteria</taxon>
        <taxon>Burkholderiales</taxon>
        <taxon>Burkholderiaceae</taxon>
        <taxon>Burkholderia</taxon>
        <taxon>pseudomallei group</taxon>
    </lineage>
</organism>
<protein>
    <recommendedName>
        <fullName evidence="1">Formate-dependent phosphoribosylglycinamide formyltransferase</fullName>
        <ecNumber evidence="1">6.3.1.21</ecNumber>
    </recommendedName>
    <alternativeName>
        <fullName evidence="1">5'-phosphoribosylglycinamide transformylase 2</fullName>
    </alternativeName>
    <alternativeName>
        <fullName evidence="1">Formate-dependent GAR transformylase</fullName>
    </alternativeName>
    <alternativeName>
        <fullName evidence="1">GAR transformylase 2</fullName>
        <shortName evidence="1">GART 2</shortName>
    </alternativeName>
    <alternativeName>
        <fullName evidence="1">Non-folate glycinamide ribonucleotide transformylase</fullName>
    </alternativeName>
    <alternativeName>
        <fullName evidence="1">Phosphoribosylglycinamide formyltransferase 2</fullName>
    </alternativeName>
</protein>
<gene>
    <name evidence="1" type="primary">purT</name>
    <name type="ordered locus">BPSL1111</name>
</gene>
<name>PURT_BURPS</name>
<keyword id="KW-0067">ATP-binding</keyword>
<keyword id="KW-0436">Ligase</keyword>
<keyword id="KW-0460">Magnesium</keyword>
<keyword id="KW-0479">Metal-binding</keyword>
<keyword id="KW-0547">Nucleotide-binding</keyword>
<keyword id="KW-0658">Purine biosynthesis</keyword>
<keyword id="KW-1185">Reference proteome</keyword>
<proteinExistence type="inferred from homology"/>
<reference key="1">
    <citation type="journal article" date="2004" name="Proc. Natl. Acad. Sci. U.S.A.">
        <title>Genomic plasticity of the causative agent of melioidosis, Burkholderia pseudomallei.</title>
        <authorList>
            <person name="Holden M.T.G."/>
            <person name="Titball R.W."/>
            <person name="Peacock S.J."/>
            <person name="Cerdeno-Tarraga A.-M."/>
            <person name="Atkins T."/>
            <person name="Crossman L.C."/>
            <person name="Pitt T."/>
            <person name="Churcher C."/>
            <person name="Mungall K.L."/>
            <person name="Bentley S.D."/>
            <person name="Sebaihia M."/>
            <person name="Thomson N.R."/>
            <person name="Bason N."/>
            <person name="Beacham I.R."/>
            <person name="Brooks K."/>
            <person name="Brown K.A."/>
            <person name="Brown N.F."/>
            <person name="Challis G.L."/>
            <person name="Cherevach I."/>
            <person name="Chillingworth T."/>
            <person name="Cronin A."/>
            <person name="Crossett B."/>
            <person name="Davis P."/>
            <person name="DeShazer D."/>
            <person name="Feltwell T."/>
            <person name="Fraser A."/>
            <person name="Hance Z."/>
            <person name="Hauser H."/>
            <person name="Holroyd S."/>
            <person name="Jagels K."/>
            <person name="Keith K.E."/>
            <person name="Maddison M."/>
            <person name="Moule S."/>
            <person name="Price C."/>
            <person name="Quail M.A."/>
            <person name="Rabbinowitsch E."/>
            <person name="Rutherford K."/>
            <person name="Sanders M."/>
            <person name="Simmonds M."/>
            <person name="Songsivilai S."/>
            <person name="Stevens K."/>
            <person name="Tumapa S."/>
            <person name="Vesaratchavest M."/>
            <person name="Whitehead S."/>
            <person name="Yeats C."/>
            <person name="Barrell B.G."/>
            <person name="Oyston P.C.F."/>
            <person name="Parkhill J."/>
        </authorList>
    </citation>
    <scope>NUCLEOTIDE SEQUENCE [LARGE SCALE GENOMIC DNA]</scope>
    <source>
        <strain>K96243</strain>
    </source>
</reference>
<comment type="function">
    <text evidence="1">Involved in the de novo purine biosynthesis. Catalyzes the transfer of formate to 5-phospho-ribosyl-glycinamide (GAR), producing 5-phospho-ribosyl-N-formylglycinamide (FGAR). Formate is provided by PurU via hydrolysis of 10-formyl-tetrahydrofolate.</text>
</comment>
<comment type="catalytic activity">
    <reaction evidence="1">
        <text>N(1)-(5-phospho-beta-D-ribosyl)glycinamide + formate + ATP = N(2)-formyl-N(1)-(5-phospho-beta-D-ribosyl)glycinamide + ADP + phosphate + H(+)</text>
        <dbReference type="Rhea" id="RHEA:24829"/>
        <dbReference type="ChEBI" id="CHEBI:15378"/>
        <dbReference type="ChEBI" id="CHEBI:15740"/>
        <dbReference type="ChEBI" id="CHEBI:30616"/>
        <dbReference type="ChEBI" id="CHEBI:43474"/>
        <dbReference type="ChEBI" id="CHEBI:143788"/>
        <dbReference type="ChEBI" id="CHEBI:147286"/>
        <dbReference type="ChEBI" id="CHEBI:456216"/>
        <dbReference type="EC" id="6.3.1.21"/>
    </reaction>
    <physiologicalReaction direction="left-to-right" evidence="1">
        <dbReference type="Rhea" id="RHEA:24830"/>
    </physiologicalReaction>
</comment>
<comment type="pathway">
    <text evidence="1">Purine metabolism; IMP biosynthesis via de novo pathway; N(2)-formyl-N(1)-(5-phospho-D-ribosyl)glycinamide from N(1)-(5-phospho-D-ribosyl)glycinamide (formate route): step 1/1.</text>
</comment>
<comment type="subunit">
    <text evidence="1">Homodimer.</text>
</comment>
<comment type="similarity">
    <text evidence="1">Belongs to the PurK/PurT family.</text>
</comment>
<evidence type="ECO:0000255" key="1">
    <source>
        <dbReference type="HAMAP-Rule" id="MF_01643"/>
    </source>
</evidence>
<accession>Q63VY4</accession>
<dbReference type="EC" id="6.3.1.21" evidence="1"/>
<dbReference type="EMBL" id="BX571965">
    <property type="protein sequence ID" value="CAH35104.1"/>
    <property type="molecule type" value="Genomic_DNA"/>
</dbReference>
<dbReference type="RefSeq" id="WP_004522466.1">
    <property type="nucleotide sequence ID" value="NZ_CP009538.1"/>
</dbReference>
<dbReference type="RefSeq" id="YP_107732.1">
    <property type="nucleotide sequence ID" value="NC_006350.1"/>
</dbReference>
<dbReference type="SMR" id="Q63VY4"/>
<dbReference type="STRING" id="272560.BPSL1111"/>
<dbReference type="GeneID" id="93059610"/>
<dbReference type="KEGG" id="bps:BPSL1111"/>
<dbReference type="PATRIC" id="fig|272560.51.peg.439"/>
<dbReference type="eggNOG" id="COG0027">
    <property type="taxonomic scope" value="Bacteria"/>
</dbReference>
<dbReference type="UniPathway" id="UPA00074">
    <property type="reaction ID" value="UER00127"/>
</dbReference>
<dbReference type="Proteomes" id="UP000000605">
    <property type="component" value="Chromosome 1"/>
</dbReference>
<dbReference type="GO" id="GO:0005829">
    <property type="term" value="C:cytosol"/>
    <property type="evidence" value="ECO:0007669"/>
    <property type="project" value="TreeGrafter"/>
</dbReference>
<dbReference type="GO" id="GO:0005524">
    <property type="term" value="F:ATP binding"/>
    <property type="evidence" value="ECO:0007669"/>
    <property type="project" value="UniProtKB-UniRule"/>
</dbReference>
<dbReference type="GO" id="GO:0000287">
    <property type="term" value="F:magnesium ion binding"/>
    <property type="evidence" value="ECO:0007669"/>
    <property type="project" value="InterPro"/>
</dbReference>
<dbReference type="GO" id="GO:0043815">
    <property type="term" value="F:phosphoribosylglycinamide formyltransferase 2 activity"/>
    <property type="evidence" value="ECO:0007669"/>
    <property type="project" value="UniProtKB-UniRule"/>
</dbReference>
<dbReference type="GO" id="GO:0004644">
    <property type="term" value="F:phosphoribosylglycinamide formyltransferase activity"/>
    <property type="evidence" value="ECO:0007669"/>
    <property type="project" value="InterPro"/>
</dbReference>
<dbReference type="GO" id="GO:0006189">
    <property type="term" value="P:'de novo' IMP biosynthetic process"/>
    <property type="evidence" value="ECO:0007669"/>
    <property type="project" value="UniProtKB-UniRule"/>
</dbReference>
<dbReference type="FunFam" id="3.30.1490.20:FF:000013">
    <property type="entry name" value="Formate-dependent phosphoribosylglycinamide formyltransferase"/>
    <property type="match status" value="1"/>
</dbReference>
<dbReference type="FunFam" id="3.40.50.20:FF:000007">
    <property type="entry name" value="Formate-dependent phosphoribosylglycinamide formyltransferase"/>
    <property type="match status" value="1"/>
</dbReference>
<dbReference type="Gene3D" id="3.40.50.20">
    <property type="match status" value="1"/>
</dbReference>
<dbReference type="Gene3D" id="3.30.1490.20">
    <property type="entry name" value="ATP-grasp fold, A domain"/>
    <property type="match status" value="1"/>
</dbReference>
<dbReference type="Gene3D" id="3.30.470.20">
    <property type="entry name" value="ATP-grasp fold, B domain"/>
    <property type="match status" value="1"/>
</dbReference>
<dbReference type="HAMAP" id="MF_01643">
    <property type="entry name" value="PurT"/>
    <property type="match status" value="1"/>
</dbReference>
<dbReference type="InterPro" id="IPR011761">
    <property type="entry name" value="ATP-grasp"/>
</dbReference>
<dbReference type="InterPro" id="IPR003135">
    <property type="entry name" value="ATP-grasp_carboxylate-amine"/>
</dbReference>
<dbReference type="InterPro" id="IPR013815">
    <property type="entry name" value="ATP_grasp_subdomain_1"/>
</dbReference>
<dbReference type="InterPro" id="IPR016185">
    <property type="entry name" value="PreATP-grasp_dom_sf"/>
</dbReference>
<dbReference type="InterPro" id="IPR005862">
    <property type="entry name" value="PurT"/>
</dbReference>
<dbReference type="InterPro" id="IPR054350">
    <property type="entry name" value="PurT/PurK_preATP-grasp"/>
</dbReference>
<dbReference type="InterPro" id="IPR048740">
    <property type="entry name" value="PurT_C"/>
</dbReference>
<dbReference type="InterPro" id="IPR011054">
    <property type="entry name" value="Rudment_hybrid_motif"/>
</dbReference>
<dbReference type="NCBIfam" id="NF006766">
    <property type="entry name" value="PRK09288.1"/>
    <property type="match status" value="1"/>
</dbReference>
<dbReference type="NCBIfam" id="TIGR01142">
    <property type="entry name" value="purT"/>
    <property type="match status" value="1"/>
</dbReference>
<dbReference type="PANTHER" id="PTHR43055">
    <property type="entry name" value="FORMATE-DEPENDENT PHOSPHORIBOSYLGLYCINAMIDE FORMYLTRANSFERASE"/>
    <property type="match status" value="1"/>
</dbReference>
<dbReference type="PANTHER" id="PTHR43055:SF1">
    <property type="entry name" value="FORMATE-DEPENDENT PHOSPHORIBOSYLGLYCINAMIDE FORMYLTRANSFERASE"/>
    <property type="match status" value="1"/>
</dbReference>
<dbReference type="Pfam" id="PF02222">
    <property type="entry name" value="ATP-grasp"/>
    <property type="match status" value="1"/>
</dbReference>
<dbReference type="Pfam" id="PF21244">
    <property type="entry name" value="PurT_C"/>
    <property type="match status" value="1"/>
</dbReference>
<dbReference type="Pfam" id="PF22660">
    <property type="entry name" value="RS_preATP-grasp-like"/>
    <property type="match status" value="1"/>
</dbReference>
<dbReference type="SUPFAM" id="SSF56059">
    <property type="entry name" value="Glutathione synthetase ATP-binding domain-like"/>
    <property type="match status" value="1"/>
</dbReference>
<dbReference type="SUPFAM" id="SSF52440">
    <property type="entry name" value="PreATP-grasp domain"/>
    <property type="match status" value="1"/>
</dbReference>
<dbReference type="SUPFAM" id="SSF51246">
    <property type="entry name" value="Rudiment single hybrid motif"/>
    <property type="match status" value="1"/>
</dbReference>
<dbReference type="PROSITE" id="PS50975">
    <property type="entry name" value="ATP_GRASP"/>
    <property type="match status" value="1"/>
</dbReference>